<accession>Q7N1X5</accession>
<dbReference type="EC" id="3.1.26.3" evidence="1"/>
<dbReference type="EMBL" id="BX571870">
    <property type="protein sequence ID" value="CAE15714.1"/>
    <property type="molecule type" value="Genomic_DNA"/>
</dbReference>
<dbReference type="RefSeq" id="WP_011147528.1">
    <property type="nucleotide sequence ID" value="NC_005126.1"/>
</dbReference>
<dbReference type="SMR" id="Q7N1X5"/>
<dbReference type="STRING" id="243265.plu3340"/>
<dbReference type="GeneID" id="48849593"/>
<dbReference type="KEGG" id="plu:plu3340"/>
<dbReference type="eggNOG" id="COG0571">
    <property type="taxonomic scope" value="Bacteria"/>
</dbReference>
<dbReference type="HOGENOM" id="CLU_000907_1_1_6"/>
<dbReference type="OrthoDB" id="9805026at2"/>
<dbReference type="Proteomes" id="UP000002514">
    <property type="component" value="Chromosome"/>
</dbReference>
<dbReference type="GO" id="GO:0005737">
    <property type="term" value="C:cytoplasm"/>
    <property type="evidence" value="ECO:0007669"/>
    <property type="project" value="UniProtKB-SubCell"/>
</dbReference>
<dbReference type="GO" id="GO:0003725">
    <property type="term" value="F:double-stranded RNA binding"/>
    <property type="evidence" value="ECO:0007669"/>
    <property type="project" value="TreeGrafter"/>
</dbReference>
<dbReference type="GO" id="GO:0046872">
    <property type="term" value="F:metal ion binding"/>
    <property type="evidence" value="ECO:0007669"/>
    <property type="project" value="UniProtKB-KW"/>
</dbReference>
<dbReference type="GO" id="GO:0004525">
    <property type="term" value="F:ribonuclease III activity"/>
    <property type="evidence" value="ECO:0007669"/>
    <property type="project" value="UniProtKB-UniRule"/>
</dbReference>
<dbReference type="GO" id="GO:0019843">
    <property type="term" value="F:rRNA binding"/>
    <property type="evidence" value="ECO:0007669"/>
    <property type="project" value="UniProtKB-KW"/>
</dbReference>
<dbReference type="GO" id="GO:0006397">
    <property type="term" value="P:mRNA processing"/>
    <property type="evidence" value="ECO:0007669"/>
    <property type="project" value="UniProtKB-UniRule"/>
</dbReference>
<dbReference type="GO" id="GO:0010468">
    <property type="term" value="P:regulation of gene expression"/>
    <property type="evidence" value="ECO:0007669"/>
    <property type="project" value="TreeGrafter"/>
</dbReference>
<dbReference type="GO" id="GO:0006364">
    <property type="term" value="P:rRNA processing"/>
    <property type="evidence" value="ECO:0007669"/>
    <property type="project" value="UniProtKB-UniRule"/>
</dbReference>
<dbReference type="GO" id="GO:0008033">
    <property type="term" value="P:tRNA processing"/>
    <property type="evidence" value="ECO:0007669"/>
    <property type="project" value="UniProtKB-KW"/>
</dbReference>
<dbReference type="CDD" id="cd10845">
    <property type="entry name" value="DSRM_RNAse_III_family"/>
    <property type="match status" value="1"/>
</dbReference>
<dbReference type="CDD" id="cd00593">
    <property type="entry name" value="RIBOc"/>
    <property type="match status" value="1"/>
</dbReference>
<dbReference type="FunFam" id="1.10.1520.10:FF:000001">
    <property type="entry name" value="Ribonuclease 3"/>
    <property type="match status" value="1"/>
</dbReference>
<dbReference type="FunFam" id="3.30.160.20:FF:000003">
    <property type="entry name" value="Ribonuclease 3"/>
    <property type="match status" value="1"/>
</dbReference>
<dbReference type="Gene3D" id="3.30.160.20">
    <property type="match status" value="1"/>
</dbReference>
<dbReference type="Gene3D" id="1.10.1520.10">
    <property type="entry name" value="Ribonuclease III domain"/>
    <property type="match status" value="1"/>
</dbReference>
<dbReference type="HAMAP" id="MF_00104">
    <property type="entry name" value="RNase_III"/>
    <property type="match status" value="1"/>
</dbReference>
<dbReference type="InterPro" id="IPR014720">
    <property type="entry name" value="dsRBD_dom"/>
</dbReference>
<dbReference type="InterPro" id="IPR011907">
    <property type="entry name" value="RNase_III"/>
</dbReference>
<dbReference type="InterPro" id="IPR000999">
    <property type="entry name" value="RNase_III_dom"/>
</dbReference>
<dbReference type="InterPro" id="IPR036389">
    <property type="entry name" value="RNase_III_sf"/>
</dbReference>
<dbReference type="NCBIfam" id="TIGR02191">
    <property type="entry name" value="RNaseIII"/>
    <property type="match status" value="1"/>
</dbReference>
<dbReference type="PANTHER" id="PTHR11207:SF0">
    <property type="entry name" value="RIBONUCLEASE 3"/>
    <property type="match status" value="1"/>
</dbReference>
<dbReference type="PANTHER" id="PTHR11207">
    <property type="entry name" value="RIBONUCLEASE III"/>
    <property type="match status" value="1"/>
</dbReference>
<dbReference type="Pfam" id="PF00035">
    <property type="entry name" value="dsrm"/>
    <property type="match status" value="1"/>
</dbReference>
<dbReference type="Pfam" id="PF14622">
    <property type="entry name" value="Ribonucleas_3_3"/>
    <property type="match status" value="1"/>
</dbReference>
<dbReference type="SMART" id="SM00358">
    <property type="entry name" value="DSRM"/>
    <property type="match status" value="1"/>
</dbReference>
<dbReference type="SMART" id="SM00535">
    <property type="entry name" value="RIBOc"/>
    <property type="match status" value="1"/>
</dbReference>
<dbReference type="SUPFAM" id="SSF54768">
    <property type="entry name" value="dsRNA-binding domain-like"/>
    <property type="match status" value="1"/>
</dbReference>
<dbReference type="SUPFAM" id="SSF69065">
    <property type="entry name" value="RNase III domain-like"/>
    <property type="match status" value="1"/>
</dbReference>
<dbReference type="PROSITE" id="PS50137">
    <property type="entry name" value="DS_RBD"/>
    <property type="match status" value="1"/>
</dbReference>
<dbReference type="PROSITE" id="PS00517">
    <property type="entry name" value="RNASE_3_1"/>
    <property type="match status" value="1"/>
</dbReference>
<dbReference type="PROSITE" id="PS50142">
    <property type="entry name" value="RNASE_3_2"/>
    <property type="match status" value="1"/>
</dbReference>
<organism>
    <name type="scientific">Photorhabdus laumondii subsp. laumondii (strain DSM 15139 / CIP 105565 / TT01)</name>
    <name type="common">Photorhabdus luminescens subsp. laumondii</name>
    <dbReference type="NCBI Taxonomy" id="243265"/>
    <lineage>
        <taxon>Bacteria</taxon>
        <taxon>Pseudomonadati</taxon>
        <taxon>Pseudomonadota</taxon>
        <taxon>Gammaproteobacteria</taxon>
        <taxon>Enterobacterales</taxon>
        <taxon>Morganellaceae</taxon>
        <taxon>Photorhabdus</taxon>
    </lineage>
</organism>
<reference key="1">
    <citation type="journal article" date="2003" name="Nat. Biotechnol.">
        <title>The genome sequence of the entomopathogenic bacterium Photorhabdus luminescens.</title>
        <authorList>
            <person name="Duchaud E."/>
            <person name="Rusniok C."/>
            <person name="Frangeul L."/>
            <person name="Buchrieser C."/>
            <person name="Givaudan A."/>
            <person name="Taourit S."/>
            <person name="Bocs S."/>
            <person name="Boursaux-Eude C."/>
            <person name="Chandler M."/>
            <person name="Charles J.-F."/>
            <person name="Dassa E."/>
            <person name="Derose R."/>
            <person name="Derzelle S."/>
            <person name="Freyssinet G."/>
            <person name="Gaudriault S."/>
            <person name="Medigue C."/>
            <person name="Lanois A."/>
            <person name="Powell K."/>
            <person name="Siguier P."/>
            <person name="Vincent R."/>
            <person name="Wingate V."/>
            <person name="Zouine M."/>
            <person name="Glaser P."/>
            <person name="Boemare N."/>
            <person name="Danchin A."/>
            <person name="Kunst F."/>
        </authorList>
    </citation>
    <scope>NUCLEOTIDE SEQUENCE [LARGE SCALE GENOMIC DNA]</scope>
    <source>
        <strain>DSM 15139 / CIP 105565 / TT01</strain>
    </source>
</reference>
<gene>
    <name evidence="1" type="primary">rnc</name>
    <name type="ordered locus">plu3340</name>
</gene>
<keyword id="KW-0963">Cytoplasm</keyword>
<keyword id="KW-0255">Endonuclease</keyword>
<keyword id="KW-0378">Hydrolase</keyword>
<keyword id="KW-0460">Magnesium</keyword>
<keyword id="KW-0479">Metal-binding</keyword>
<keyword id="KW-0507">mRNA processing</keyword>
<keyword id="KW-0540">Nuclease</keyword>
<keyword id="KW-1185">Reference proteome</keyword>
<keyword id="KW-0694">RNA-binding</keyword>
<keyword id="KW-0698">rRNA processing</keyword>
<keyword id="KW-0699">rRNA-binding</keyword>
<keyword id="KW-0819">tRNA processing</keyword>
<evidence type="ECO:0000255" key="1">
    <source>
        <dbReference type="HAMAP-Rule" id="MF_00104"/>
    </source>
</evidence>
<feature type="chain" id="PRO_0000228564" description="Ribonuclease 3">
    <location>
        <begin position="1"/>
        <end position="226"/>
    </location>
</feature>
<feature type="domain" description="RNase III" evidence="1">
    <location>
        <begin position="6"/>
        <end position="128"/>
    </location>
</feature>
<feature type="domain" description="DRBM" evidence="1">
    <location>
        <begin position="155"/>
        <end position="225"/>
    </location>
</feature>
<feature type="active site" evidence="1">
    <location>
        <position position="45"/>
    </location>
</feature>
<feature type="active site" evidence="1">
    <location>
        <position position="117"/>
    </location>
</feature>
<feature type="binding site" evidence="1">
    <location>
        <position position="41"/>
    </location>
    <ligand>
        <name>Mg(2+)</name>
        <dbReference type="ChEBI" id="CHEBI:18420"/>
    </ligand>
</feature>
<feature type="binding site" evidence="1">
    <location>
        <position position="114"/>
    </location>
    <ligand>
        <name>Mg(2+)</name>
        <dbReference type="ChEBI" id="CHEBI:18420"/>
    </ligand>
</feature>
<feature type="binding site" evidence="1">
    <location>
        <position position="117"/>
    </location>
    <ligand>
        <name>Mg(2+)</name>
        <dbReference type="ChEBI" id="CHEBI:18420"/>
    </ligand>
</feature>
<protein>
    <recommendedName>
        <fullName evidence="1">Ribonuclease 3</fullName>
        <ecNumber evidence="1">3.1.26.3</ecNumber>
    </recommendedName>
    <alternativeName>
        <fullName evidence="1">Ribonuclease III</fullName>
        <shortName evidence="1">RNase III</shortName>
    </alternativeName>
</protein>
<sequence length="226" mass="25617">MNPIVINRLQRKLGYTFDQYDLLIQALTHRSASSKHNERLEFLGDSILSFVIANALYHRFPRVDEGDMSRMRATLVRGNTLAELAREFELGECLRLGPGELKSGGYRRESILADTVEALIGAIFLDSDIQSIERIILSWYETRLNEISPGDKQKDPKTRLQEYLQGHHLPLPSYLVVMVRGEAHDQEFTIHCQVSGIEQPVKGTGSSRRKAEQAAAEQALKQLELE</sequence>
<name>RNC_PHOLL</name>
<comment type="function">
    <text evidence="1">Digests double-stranded RNA. Involved in the processing of primary rRNA transcript to yield the immediate precursors to the large and small rRNAs (23S and 16S). Processes some mRNAs, and tRNAs when they are encoded in the rRNA operon. Processes pre-crRNA and tracrRNA of type II CRISPR loci if present in the organism.</text>
</comment>
<comment type="catalytic activity">
    <reaction evidence="1">
        <text>Endonucleolytic cleavage to 5'-phosphomonoester.</text>
        <dbReference type="EC" id="3.1.26.3"/>
    </reaction>
</comment>
<comment type="cofactor">
    <cofactor evidence="1">
        <name>Mg(2+)</name>
        <dbReference type="ChEBI" id="CHEBI:18420"/>
    </cofactor>
</comment>
<comment type="subunit">
    <text evidence="1">Homodimer.</text>
</comment>
<comment type="subcellular location">
    <subcellularLocation>
        <location evidence="1">Cytoplasm</location>
    </subcellularLocation>
</comment>
<comment type="similarity">
    <text evidence="1">Belongs to the ribonuclease III family.</text>
</comment>
<proteinExistence type="inferred from homology"/>